<name>NCS1_RAT</name>
<dbReference type="EMBL" id="L27421">
    <property type="protein sequence ID" value="AAA88510.1"/>
    <property type="molecule type" value="mRNA"/>
</dbReference>
<dbReference type="EMBL" id="X82188">
    <property type="protein sequence ID" value="CAA57678.1"/>
    <property type="molecule type" value="mRNA"/>
</dbReference>
<dbReference type="RefSeq" id="NP_077342.1">
    <property type="nucleotide sequence ID" value="NM_024366.2"/>
</dbReference>
<dbReference type="PDB" id="4OV2">
    <property type="method" value="X-ray"/>
    <property type="resolution" value="2.60 A"/>
    <property type="chains" value="A/B/C/D=1-177"/>
</dbReference>
<dbReference type="PDB" id="4YRU">
    <property type="method" value="X-ray"/>
    <property type="resolution" value="2.80 A"/>
    <property type="chains" value="A/B/C/D=1-177"/>
</dbReference>
<dbReference type="PDB" id="5AEQ">
    <property type="method" value="X-ray"/>
    <property type="resolution" value="1.95 A"/>
    <property type="chains" value="A/B=1-190"/>
</dbReference>
<dbReference type="PDB" id="5AER">
    <property type="method" value="X-ray"/>
    <property type="resolution" value="2.19 A"/>
    <property type="chains" value="A=1-190"/>
</dbReference>
<dbReference type="PDB" id="5AFP">
    <property type="method" value="X-ray"/>
    <property type="resolution" value="2.30 A"/>
    <property type="chains" value="A/B=1-190"/>
</dbReference>
<dbReference type="PDBsum" id="4OV2"/>
<dbReference type="PDBsum" id="4YRU"/>
<dbReference type="PDBsum" id="5AEQ"/>
<dbReference type="PDBsum" id="5AER"/>
<dbReference type="PDBsum" id="5AFP"/>
<dbReference type="BMRB" id="P62168"/>
<dbReference type="SMR" id="P62168"/>
<dbReference type="FunCoup" id="P62168">
    <property type="interactions" value="1049"/>
</dbReference>
<dbReference type="IntAct" id="P62168">
    <property type="interactions" value="7"/>
</dbReference>
<dbReference type="STRING" id="10116.ENSRNOP00000011648"/>
<dbReference type="iPTMnet" id="P62168"/>
<dbReference type="PhosphoSitePlus" id="P62168"/>
<dbReference type="jPOST" id="P62168"/>
<dbReference type="PaxDb" id="10116-ENSRNOP00000011648"/>
<dbReference type="Ensembl" id="ENSRNOT00000111270.1">
    <property type="protein sequence ID" value="ENSRNOP00000091251.1"/>
    <property type="gene ID" value="ENSRNOG00000064701.1"/>
</dbReference>
<dbReference type="GeneID" id="65153"/>
<dbReference type="KEGG" id="rno:65153"/>
<dbReference type="UCSC" id="RGD:68417">
    <property type="organism name" value="rat"/>
</dbReference>
<dbReference type="AGR" id="RGD:68417"/>
<dbReference type="CTD" id="23413"/>
<dbReference type="RGD" id="68417">
    <property type="gene designation" value="Ncs1"/>
</dbReference>
<dbReference type="eggNOG" id="KOG0044">
    <property type="taxonomic scope" value="Eukaryota"/>
</dbReference>
<dbReference type="GeneTree" id="ENSGT00940000163010"/>
<dbReference type="HOGENOM" id="CLU_072366_1_2_1"/>
<dbReference type="InParanoid" id="P62168"/>
<dbReference type="OMA" id="EYVFNVF"/>
<dbReference type="OrthoDB" id="14850at9989"/>
<dbReference type="PhylomeDB" id="P62168"/>
<dbReference type="TreeFam" id="TF300009"/>
<dbReference type="EvolutionaryTrace" id="P62168"/>
<dbReference type="PRO" id="PR:P62168"/>
<dbReference type="Proteomes" id="UP000002494">
    <property type="component" value="Chromosome 3"/>
</dbReference>
<dbReference type="Bgee" id="ENSRNOG00000008761">
    <property type="expression patterns" value="Expressed in frontal cortex and 17 other cell types or tissues"/>
</dbReference>
<dbReference type="GO" id="GO:0030424">
    <property type="term" value="C:axon"/>
    <property type="evidence" value="ECO:0000266"/>
    <property type="project" value="RGD"/>
</dbReference>
<dbReference type="GO" id="GO:0044305">
    <property type="term" value="C:calyx of Held"/>
    <property type="evidence" value="ECO:0000314"/>
    <property type="project" value="SynGO"/>
</dbReference>
<dbReference type="GO" id="GO:0005737">
    <property type="term" value="C:cytoplasm"/>
    <property type="evidence" value="ECO:0000266"/>
    <property type="project" value="RGD"/>
</dbReference>
<dbReference type="GO" id="GO:0030425">
    <property type="term" value="C:dendrite"/>
    <property type="evidence" value="ECO:0000266"/>
    <property type="project" value="RGD"/>
</dbReference>
<dbReference type="GO" id="GO:0031045">
    <property type="term" value="C:dense core granule"/>
    <property type="evidence" value="ECO:0000314"/>
    <property type="project" value="RGD"/>
</dbReference>
<dbReference type="GO" id="GO:0098978">
    <property type="term" value="C:glutamatergic synapse"/>
    <property type="evidence" value="ECO:0000314"/>
    <property type="project" value="SynGO"/>
</dbReference>
<dbReference type="GO" id="GO:0005794">
    <property type="term" value="C:Golgi apparatus"/>
    <property type="evidence" value="ECO:0007669"/>
    <property type="project" value="UniProtKB-SubCell"/>
</dbReference>
<dbReference type="GO" id="GO:0048471">
    <property type="term" value="C:perinuclear region of cytoplasm"/>
    <property type="evidence" value="ECO:0007669"/>
    <property type="project" value="UniProtKB-SubCell"/>
</dbReference>
<dbReference type="GO" id="GO:0005886">
    <property type="term" value="C:plasma membrane"/>
    <property type="evidence" value="ECO:0000266"/>
    <property type="project" value="RGD"/>
</dbReference>
<dbReference type="GO" id="GO:0098794">
    <property type="term" value="C:postsynapse"/>
    <property type="evidence" value="ECO:0000314"/>
    <property type="project" value="SynGO"/>
</dbReference>
<dbReference type="GO" id="GO:0099524">
    <property type="term" value="C:postsynaptic cytosol"/>
    <property type="evidence" value="ECO:0000314"/>
    <property type="project" value="SynGO"/>
</dbReference>
<dbReference type="GO" id="GO:0014069">
    <property type="term" value="C:postsynaptic density"/>
    <property type="evidence" value="ECO:0007669"/>
    <property type="project" value="UniProtKB-SubCell"/>
</dbReference>
<dbReference type="GO" id="GO:0099523">
    <property type="term" value="C:presynaptic cytosol"/>
    <property type="evidence" value="ECO:0000314"/>
    <property type="project" value="SynGO"/>
</dbReference>
<dbReference type="GO" id="GO:0005509">
    <property type="term" value="F:calcium ion binding"/>
    <property type="evidence" value="ECO:0000314"/>
    <property type="project" value="RGD"/>
</dbReference>
<dbReference type="GO" id="GO:0008048">
    <property type="term" value="F:calcium sensitive guanylate cyclase activator activity"/>
    <property type="evidence" value="ECO:0000318"/>
    <property type="project" value="GO_Central"/>
</dbReference>
<dbReference type="GO" id="GO:0008427">
    <property type="term" value="F:calcium-dependent protein kinase inhibitor activity"/>
    <property type="evidence" value="ECO:0000304"/>
    <property type="project" value="UniProtKB"/>
</dbReference>
<dbReference type="GO" id="GO:0000287">
    <property type="term" value="F:magnesium ion binding"/>
    <property type="evidence" value="ECO:0000314"/>
    <property type="project" value="RGD"/>
</dbReference>
<dbReference type="GO" id="GO:0019901">
    <property type="term" value="F:protein kinase binding"/>
    <property type="evidence" value="ECO:0000353"/>
    <property type="project" value="RGD"/>
</dbReference>
<dbReference type="GO" id="GO:0005245">
    <property type="term" value="F:voltage-gated calcium channel activity"/>
    <property type="evidence" value="ECO:0000315"/>
    <property type="project" value="UniProtKB"/>
</dbReference>
<dbReference type="GO" id="GO:0050850">
    <property type="term" value="P:positive regulation of calcium-mediated signaling"/>
    <property type="evidence" value="ECO:0000315"/>
    <property type="project" value="RGD"/>
</dbReference>
<dbReference type="GO" id="GO:0045921">
    <property type="term" value="P:positive regulation of exocytosis"/>
    <property type="evidence" value="ECO:0000314"/>
    <property type="project" value="RGD"/>
</dbReference>
<dbReference type="GO" id="GO:0010975">
    <property type="term" value="P:regulation of neuron projection development"/>
    <property type="evidence" value="ECO:0000315"/>
    <property type="project" value="UniProtKB"/>
</dbReference>
<dbReference type="GO" id="GO:0099509">
    <property type="term" value="P:regulation of presynaptic cytosolic calcium ion concentration"/>
    <property type="evidence" value="ECO:0000314"/>
    <property type="project" value="SynGO"/>
</dbReference>
<dbReference type="GO" id="GO:0009966">
    <property type="term" value="P:regulation of signal transduction"/>
    <property type="evidence" value="ECO:0000318"/>
    <property type="project" value="GO_Central"/>
</dbReference>
<dbReference type="GO" id="GO:2000300">
    <property type="term" value="P:regulation of synaptic vesicle exocytosis"/>
    <property type="evidence" value="ECO:0000314"/>
    <property type="project" value="SynGO"/>
</dbReference>
<dbReference type="CDD" id="cd00051">
    <property type="entry name" value="EFh"/>
    <property type="match status" value="2"/>
</dbReference>
<dbReference type="FunFam" id="1.10.238.10:FF:000009">
    <property type="entry name" value="Visinin-like protein 1"/>
    <property type="match status" value="1"/>
</dbReference>
<dbReference type="Gene3D" id="1.10.238.10">
    <property type="entry name" value="EF-hand"/>
    <property type="match status" value="1"/>
</dbReference>
<dbReference type="InterPro" id="IPR011992">
    <property type="entry name" value="EF-hand-dom_pair"/>
</dbReference>
<dbReference type="InterPro" id="IPR018247">
    <property type="entry name" value="EF_Hand_1_Ca_BS"/>
</dbReference>
<dbReference type="InterPro" id="IPR002048">
    <property type="entry name" value="EF_hand_dom"/>
</dbReference>
<dbReference type="InterPro" id="IPR028846">
    <property type="entry name" value="Recoverin"/>
</dbReference>
<dbReference type="PANTHER" id="PTHR23055">
    <property type="entry name" value="CALCIUM BINDING PROTEINS"/>
    <property type="match status" value="1"/>
</dbReference>
<dbReference type="PANTHER" id="PTHR23055:SF198">
    <property type="entry name" value="NEURONAL CALCIUM SENSOR 1"/>
    <property type="match status" value="1"/>
</dbReference>
<dbReference type="Pfam" id="PF00036">
    <property type="entry name" value="EF-hand_1"/>
    <property type="match status" value="1"/>
</dbReference>
<dbReference type="Pfam" id="PF13499">
    <property type="entry name" value="EF-hand_7"/>
    <property type="match status" value="1"/>
</dbReference>
<dbReference type="PRINTS" id="PR00450">
    <property type="entry name" value="RECOVERIN"/>
</dbReference>
<dbReference type="SMART" id="SM00054">
    <property type="entry name" value="EFh"/>
    <property type="match status" value="3"/>
</dbReference>
<dbReference type="SUPFAM" id="SSF47473">
    <property type="entry name" value="EF-hand"/>
    <property type="match status" value="1"/>
</dbReference>
<dbReference type="PROSITE" id="PS00018">
    <property type="entry name" value="EF_HAND_1"/>
    <property type="match status" value="3"/>
</dbReference>
<dbReference type="PROSITE" id="PS50222">
    <property type="entry name" value="EF_HAND_2"/>
    <property type="match status" value="3"/>
</dbReference>
<reference key="1">
    <citation type="journal article" date="1995" name="Biochem. Biophys. Res. Commun.">
        <title>Regulation of rhodopsin phosphorylation by a family of neuronal calcium sensors.</title>
        <authorList>
            <person name="de Castro E."/>
            <person name="Nef S."/>
            <person name="Fiumelli H."/>
            <person name="Lenz S.E."/>
            <person name="Kawamura S."/>
            <person name="Nef P."/>
        </authorList>
    </citation>
    <scope>NUCLEOTIDE SEQUENCE [MRNA]</scope>
</reference>
<reference key="2">
    <citation type="submission" date="1994-10" db="EMBL/GenBank/DDBJ databases">
        <authorList>
            <person name="Lindemeier J."/>
        </authorList>
    </citation>
    <scope>NUCLEOTIDE SEQUENCE [MRNA]</scope>
    <source>
        <tissue>Brain</tissue>
    </source>
</reference>
<reference key="3">
    <citation type="journal article" date="1999" name="J. Biol. Chem.">
        <title>Neuronal Ca(2+) sensor 1. Characterization of the myristoylated protein, its cellular effects in permeabilized adrenal chromaffin cells, Ca(2+)-independent membrane association, and interaction with binding proteins, suggesting a role in rapid Ca(2+) signal transduction.</title>
        <authorList>
            <person name="McFerran B.W."/>
            <person name="Weiss J.L."/>
            <person name="Burgoyne R.D."/>
        </authorList>
    </citation>
    <scope>MYRISTOYLATION AT GLY-2</scope>
    <scope>CALCIUM-BINDING</scope>
    <scope>SUBCELLULAR LOCATION</scope>
</reference>
<reference key="4">
    <citation type="journal article" date="2001" name="J. Biol. Chem.">
        <title>Interaction of neuronal calcium sensor-1 (NCS-1) with phosphatidylinositol 4-kinase beta stimulates lipid kinase activity and affects membrane trafficking in COS-7 cells.</title>
        <authorList>
            <person name="Zhao X."/>
            <person name="Varnai P."/>
            <person name="Tuymetova G."/>
            <person name="Balla A."/>
            <person name="Toth Z.E."/>
            <person name="Oker-Blom C."/>
            <person name="Roder J."/>
            <person name="Jeromin A."/>
            <person name="Balla T."/>
        </authorList>
    </citation>
    <scope>INTERACTION WITH PI4KB</scope>
    <scope>SUBCELLULAR LOCATION</scope>
</reference>
<reference key="5">
    <citation type="journal article" date="2007" name="Proc. Natl. Acad. Sci. U.S.A.">
        <title>IL1-receptor accessory protein-like 1 (IL1RAPL1), a protein involved in cognitive functions, regulates N-type Ca2+-channel and neurite elongation.</title>
        <authorList>
            <person name="Gambino F."/>
            <person name="Pavlowsky A."/>
            <person name="Begle A."/>
            <person name="Dupont J.-L."/>
            <person name="Bahi N."/>
            <person name="Courjaret R."/>
            <person name="Gardette R."/>
            <person name="Hadjkacem H."/>
            <person name="Skala H."/>
            <person name="Poulain B."/>
            <person name="Chelly J."/>
            <person name="Vitale N."/>
            <person name="Humeau Y."/>
        </authorList>
    </citation>
    <scope>FUNCTION</scope>
</reference>
<reference key="6">
    <citation type="journal article" date="2008" name="J. Mol. Biol.">
        <title>Regulatory and structural EF-hand motifs of neuronal calcium sensor-1: Mg 2+ modulates Ca 2+ binding, Ca 2+ -induced conformational changes, and equilibrium unfolding transitions.</title>
        <authorList>
            <person name="Aravind P."/>
            <person name="Chandra K."/>
            <person name="Reddy P.P."/>
            <person name="Jeromin A."/>
            <person name="Chary K.V.R."/>
            <person name="Sharma Y."/>
        </authorList>
    </citation>
    <scope>MUTAGENESIS OF ASP-73; GLU-84; ASP-109 AND GLU-120</scope>
    <scope>CALCIUM-BINDING</scope>
    <scope>MAGNESIUM-BINDING</scope>
</reference>
<reference key="7">
    <citation type="journal article" date="2008" name="Neuron">
        <title>Metabotropic glutamate receptor-mediated LTD involves two interacting Ca(2+) sensors, NCS-1 and PICK1.</title>
        <authorList>
            <person name="Jo J."/>
            <person name="Heon S."/>
            <person name="Kim M.J."/>
            <person name="Son G.H."/>
            <person name="Park Y."/>
            <person name="Henley J.M."/>
            <person name="Weiss J.L."/>
            <person name="Sheng M."/>
            <person name="Collingridge G.L."/>
            <person name="Cho K."/>
        </authorList>
    </citation>
    <scope>INTERACTION WITH PICK1</scope>
</reference>
<reference evidence="11 12 13 14" key="8">
    <citation type="journal article" date="2015" name="J. Biol. Chem.">
        <title>Neuronal Calcium Sensor-1 Binds the D2 Dopamine Receptor and G-protein-coupled Receptor Kinase 1 (GRK1) Peptides Using Different Modes of Interactions.</title>
        <authorList>
            <person name="Pandalaneni S."/>
            <person name="Karuppiah V."/>
            <person name="Saleem M."/>
            <person name="Haynes L.P."/>
            <person name="Burgoyne R.D."/>
            <person name="Mayans O."/>
            <person name="Derrick J.P."/>
            <person name="Lian L.Y."/>
        </authorList>
    </citation>
    <scope>X-RAY CRYSTALLOGRAPHY (1.95 ANGSTROMS) IN COMPLEX WITH CALCIUM; DRD2 AND RK</scope>
    <scope>SUBUNIT</scope>
</reference>
<evidence type="ECO:0000250" key="1">
    <source>
        <dbReference type="UniProtKB" id="P62166"/>
    </source>
</evidence>
<evidence type="ECO:0000255" key="2">
    <source>
        <dbReference type="PROSITE-ProRule" id="PRU00448"/>
    </source>
</evidence>
<evidence type="ECO:0000269" key="3">
    <source>
    </source>
</evidence>
<evidence type="ECO:0000269" key="4">
    <source>
    </source>
</evidence>
<evidence type="ECO:0000269" key="5">
    <source>
    </source>
</evidence>
<evidence type="ECO:0000269" key="6">
    <source>
    </source>
</evidence>
<evidence type="ECO:0000269" key="7">
    <source>
    </source>
</evidence>
<evidence type="ECO:0000269" key="8">
    <source>
    </source>
</evidence>
<evidence type="ECO:0000305" key="9"/>
<evidence type="ECO:0007744" key="10">
    <source>
        <dbReference type="PDB" id="4OV2"/>
    </source>
</evidence>
<evidence type="ECO:0007744" key="11">
    <source>
        <dbReference type="PDB" id="4YRU"/>
    </source>
</evidence>
<evidence type="ECO:0007744" key="12">
    <source>
        <dbReference type="PDB" id="5AEQ"/>
    </source>
</evidence>
<evidence type="ECO:0007744" key="13">
    <source>
        <dbReference type="PDB" id="5AER"/>
    </source>
</evidence>
<evidence type="ECO:0007744" key="14">
    <source>
        <dbReference type="PDB" id="5AFP"/>
    </source>
</evidence>
<evidence type="ECO:0007829" key="15">
    <source>
        <dbReference type="PDB" id="5AEQ"/>
    </source>
</evidence>
<evidence type="ECO:0007829" key="16">
    <source>
        <dbReference type="PDB" id="5AER"/>
    </source>
</evidence>
<keyword id="KW-0002">3D-structure</keyword>
<keyword id="KW-0106">Calcium</keyword>
<keyword id="KW-1003">Cell membrane</keyword>
<keyword id="KW-0963">Cytoplasm</keyword>
<keyword id="KW-0333">Golgi apparatus</keyword>
<keyword id="KW-0449">Lipoprotein</keyword>
<keyword id="KW-0472">Membrane</keyword>
<keyword id="KW-0479">Metal-binding</keyword>
<keyword id="KW-0519">Myristate</keyword>
<keyword id="KW-1185">Reference proteome</keyword>
<keyword id="KW-0677">Repeat</keyword>
<keyword id="KW-0770">Synapse</keyword>
<protein>
    <recommendedName>
        <fullName>Neuronal calcium sensor 1</fullName>
        <shortName>NCS-1</shortName>
    </recommendedName>
    <alternativeName>
        <fullName>Frequenin homolog</fullName>
    </alternativeName>
    <alternativeName>
        <fullName>Frequenin-like protein</fullName>
    </alternativeName>
    <alternativeName>
        <fullName>Frequenin-like ubiquitous protein</fullName>
    </alternativeName>
</protein>
<sequence>MGKSNSKLKPEVVEELTRKTYFTEKEVQQWYKGFIKDCPSGQLDAAGFQKIYKQFFPFGDPTKFATFVFNVFDENKDGRIEFSEFIQALSVTSRGTLDEKLRWAFKLYDLDNDGYITRNEMLDIVDAIYQMVGNTVELPEEENTPEKRVDRIFAMMDKNADGKLTLQEFQEGSKADPSIVQALSLYDGLV</sequence>
<organism>
    <name type="scientific">Rattus norvegicus</name>
    <name type="common">Rat</name>
    <dbReference type="NCBI Taxonomy" id="10116"/>
    <lineage>
        <taxon>Eukaryota</taxon>
        <taxon>Metazoa</taxon>
        <taxon>Chordata</taxon>
        <taxon>Craniata</taxon>
        <taxon>Vertebrata</taxon>
        <taxon>Euteleostomi</taxon>
        <taxon>Mammalia</taxon>
        <taxon>Eutheria</taxon>
        <taxon>Euarchontoglires</taxon>
        <taxon>Glires</taxon>
        <taxon>Rodentia</taxon>
        <taxon>Myomorpha</taxon>
        <taxon>Muroidea</taxon>
        <taxon>Muridae</taxon>
        <taxon>Murinae</taxon>
        <taxon>Rattus</taxon>
    </lineage>
</organism>
<feature type="initiator methionine" description="Removed" evidence="3">
    <location>
        <position position="1"/>
    </location>
</feature>
<feature type="chain" id="PRO_0000073790" description="Neuronal calcium sensor 1">
    <location>
        <begin position="2"/>
        <end position="190"/>
    </location>
</feature>
<feature type="domain" description="EF-hand 1" evidence="9">
    <location>
        <begin position="24"/>
        <end position="59"/>
    </location>
</feature>
<feature type="domain" description="EF-hand 2" evidence="2">
    <location>
        <begin position="60"/>
        <end position="95"/>
    </location>
</feature>
<feature type="domain" description="EF-hand 3" evidence="2">
    <location>
        <begin position="96"/>
        <end position="131"/>
    </location>
</feature>
<feature type="domain" description="EF-hand 4" evidence="2">
    <location>
        <begin position="144"/>
        <end position="179"/>
    </location>
</feature>
<feature type="region of interest" description="Ancestral calcium site 1">
    <location>
        <begin position="36"/>
        <end position="47"/>
    </location>
</feature>
<feature type="region of interest" description="Interaction with IL1RAPL1" evidence="1">
    <location>
        <begin position="174"/>
        <end position="190"/>
    </location>
</feature>
<feature type="binding site" evidence="2 8 10 11 12 13">
    <location>
        <position position="73"/>
    </location>
    <ligand>
        <name>Ca(2+)</name>
        <dbReference type="ChEBI" id="CHEBI:29108"/>
        <label>1</label>
    </ligand>
</feature>
<feature type="binding site" evidence="2 8 10 11 12 13">
    <location>
        <position position="75"/>
    </location>
    <ligand>
        <name>Ca(2+)</name>
        <dbReference type="ChEBI" id="CHEBI:29108"/>
        <label>1</label>
    </ligand>
</feature>
<feature type="binding site" evidence="2 8 10 11 12 13">
    <location>
        <position position="77"/>
    </location>
    <ligand>
        <name>Ca(2+)</name>
        <dbReference type="ChEBI" id="CHEBI:29108"/>
        <label>1</label>
    </ligand>
</feature>
<feature type="binding site" evidence="2 8 10 11 12 13">
    <location>
        <position position="79"/>
    </location>
    <ligand>
        <name>Ca(2+)</name>
        <dbReference type="ChEBI" id="CHEBI:29108"/>
        <label>1</label>
    </ligand>
</feature>
<feature type="binding site" evidence="8 11 12 13">
    <location>
        <position position="81"/>
    </location>
    <ligand>
        <name>Ca(2+)</name>
        <dbReference type="ChEBI" id="CHEBI:29108"/>
        <label>1</label>
    </ligand>
</feature>
<feature type="binding site" evidence="2 8 10 11 12 13">
    <location>
        <position position="84"/>
    </location>
    <ligand>
        <name>Ca(2+)</name>
        <dbReference type="ChEBI" id="CHEBI:29108"/>
        <label>1</label>
    </ligand>
</feature>
<feature type="binding site" evidence="2 8 10 11 12">
    <location>
        <position position="109"/>
    </location>
    <ligand>
        <name>Ca(2+)</name>
        <dbReference type="ChEBI" id="CHEBI:29108"/>
        <label>2</label>
    </ligand>
</feature>
<feature type="binding site" evidence="2 8 10 11 12">
    <location>
        <position position="111"/>
    </location>
    <ligand>
        <name>Ca(2+)</name>
        <dbReference type="ChEBI" id="CHEBI:29108"/>
        <label>2</label>
    </ligand>
</feature>
<feature type="binding site" evidence="2 8 10 11 12">
    <location>
        <position position="113"/>
    </location>
    <ligand>
        <name>Ca(2+)</name>
        <dbReference type="ChEBI" id="CHEBI:29108"/>
        <label>2</label>
    </ligand>
</feature>
<feature type="binding site" evidence="2 8 10 11 12">
    <location>
        <position position="115"/>
    </location>
    <ligand>
        <name>Ca(2+)</name>
        <dbReference type="ChEBI" id="CHEBI:29108"/>
        <label>2</label>
    </ligand>
</feature>
<feature type="binding site" evidence="2 8 10 11 12">
    <location>
        <position position="120"/>
    </location>
    <ligand>
        <name>Ca(2+)</name>
        <dbReference type="ChEBI" id="CHEBI:29108"/>
        <label>2</label>
    </ligand>
</feature>
<feature type="binding site" evidence="2 8 10 11 12 13 14">
    <location>
        <position position="157"/>
    </location>
    <ligand>
        <name>Ca(2+)</name>
        <dbReference type="ChEBI" id="CHEBI:29108"/>
        <label>3</label>
    </ligand>
</feature>
<feature type="binding site" evidence="2 8 10 11 12 13 14">
    <location>
        <position position="159"/>
    </location>
    <ligand>
        <name>Ca(2+)</name>
        <dbReference type="ChEBI" id="CHEBI:29108"/>
        <label>3</label>
    </ligand>
</feature>
<feature type="binding site" evidence="2 8 10 11 12 13 14">
    <location>
        <position position="161"/>
    </location>
    <ligand>
        <name>Ca(2+)</name>
        <dbReference type="ChEBI" id="CHEBI:29108"/>
        <label>3</label>
    </ligand>
</feature>
<feature type="binding site" evidence="2 8 10 11 12 13 14">
    <location>
        <position position="163"/>
    </location>
    <ligand>
        <name>Ca(2+)</name>
        <dbReference type="ChEBI" id="CHEBI:29108"/>
        <label>3</label>
    </ligand>
</feature>
<feature type="binding site" evidence="2 8 10 11 12 13 14">
    <location>
        <position position="168"/>
    </location>
    <ligand>
        <name>Ca(2+)</name>
        <dbReference type="ChEBI" id="CHEBI:29108"/>
        <label>3</label>
    </ligand>
</feature>
<feature type="lipid moiety-binding region" description="N-myristoyl glycine" evidence="3">
    <location>
        <position position="2"/>
    </location>
</feature>
<feature type="mutagenesis site" description="Loss of magnesium-binding; when associated with Q-84, A-109 and Q-120." evidence="6">
    <original>D</original>
    <variation>A</variation>
    <location>
        <position position="73"/>
    </location>
</feature>
<feature type="mutagenesis site" description="Loss of magnesium-binding; when associated with A-73, A-109 and Q-120." evidence="6">
    <original>E</original>
    <variation>Q</variation>
    <location>
        <position position="84"/>
    </location>
</feature>
<feature type="mutagenesis site" description="Loss of magnesium-binding; when associated with A-73, Q-84 and Q-120." evidence="6">
    <original>D</original>
    <variation>A</variation>
    <location>
        <position position="109"/>
    </location>
</feature>
<feature type="mutagenesis site" description="Loss of magnesium-binding; when associated with A-73, Q-84 and A-109." evidence="6">
    <original>E</original>
    <variation>Q</variation>
    <location>
        <position position="120"/>
    </location>
</feature>
<feature type="helix" evidence="15">
    <location>
        <begin position="10"/>
        <end position="18"/>
    </location>
</feature>
<feature type="strand" evidence="16">
    <location>
        <begin position="20"/>
        <end position="22"/>
    </location>
</feature>
<feature type="helix" evidence="15">
    <location>
        <begin position="24"/>
        <end position="37"/>
    </location>
</feature>
<feature type="strand" evidence="15">
    <location>
        <begin position="41"/>
        <end position="43"/>
    </location>
</feature>
<feature type="helix" evidence="15">
    <location>
        <begin position="45"/>
        <end position="49"/>
    </location>
</feature>
<feature type="helix" evidence="15">
    <location>
        <begin position="51"/>
        <end position="55"/>
    </location>
</feature>
<feature type="helix" evidence="15">
    <location>
        <begin position="62"/>
        <end position="72"/>
    </location>
</feature>
<feature type="strand" evidence="16">
    <location>
        <begin position="77"/>
        <end position="81"/>
    </location>
</feature>
<feature type="helix" evidence="15">
    <location>
        <begin position="82"/>
        <end position="94"/>
    </location>
</feature>
<feature type="helix" evidence="15">
    <location>
        <begin position="97"/>
        <end position="108"/>
    </location>
</feature>
<feature type="strand" evidence="15">
    <location>
        <begin position="113"/>
        <end position="117"/>
    </location>
</feature>
<feature type="helix" evidence="15">
    <location>
        <begin position="118"/>
        <end position="130"/>
    </location>
</feature>
<feature type="helix" evidence="16">
    <location>
        <begin position="133"/>
        <end position="135"/>
    </location>
</feature>
<feature type="helix" evidence="15">
    <location>
        <begin position="140"/>
        <end position="142"/>
    </location>
</feature>
<feature type="helix" evidence="15">
    <location>
        <begin position="145"/>
        <end position="156"/>
    </location>
</feature>
<feature type="strand" evidence="15">
    <location>
        <begin position="161"/>
        <end position="165"/>
    </location>
</feature>
<feature type="helix" evidence="15">
    <location>
        <begin position="166"/>
        <end position="175"/>
    </location>
</feature>
<feature type="helix" evidence="15">
    <location>
        <begin position="177"/>
        <end position="183"/>
    </location>
</feature>
<feature type="helix" evidence="16">
    <location>
        <begin position="186"/>
        <end position="189"/>
    </location>
</feature>
<gene>
    <name type="primary">Ncs1</name>
    <name type="synonym">Flup</name>
    <name type="synonym">Freq</name>
</gene>
<accession>P62168</accession>
<accession>P36610</accession>
<accession>Q9UK26</accession>
<comment type="function">
    <text evidence="5">Neuronal calcium sensor, regulator of G protein-coupled receptor phosphorylation in a calcium dependent manner. Directly regulates GRK1 (RHOK), but not GRK2 to GRK5. Can substitute for calmodulin. Stimulates PI4KB kinase activity. Involved in long-term synaptic plasticity through its interaction with PICK1. May also play a role in neuron differentiation through inhibition of the activity of N-type voltage-gated calcium channel.</text>
</comment>
<comment type="subunit">
    <text evidence="1 4 7 8">Monomer (PubMed:25979333). Interacts with KCND2 (By similarity). Interacts in a calcium-independent manner with PI4KB, but only if myristoylated (PubMed:11526106). This binding competes with CALN2/CABP7 binding to PI4KB (PubMed:11526106). Interacts in a calcium-dependent manner with PICK1 (via AH domain) (PubMed:19109914). Interacts with ARF1, ARF3, ARF5 and ARF6 (By similarity). Interacts with IL1RAPL1 (By similarity). Interacts with RIC8A; interaction is favored in the absence of Ca(2+) and myristoylation of NCS1 is not required (By similarity).</text>
</comment>
<comment type="interaction">
    <interactant intactId="EBI-907774">
        <id>P62168</id>
    </interactant>
    <interactant intactId="EBI-449051">
        <id>P84080</id>
        <label>ARF1</label>
    </interactant>
    <organismsDiffer>true</organismsDiffer>
    <experiments>2</experiments>
</comment>
<comment type="interaction">
    <interactant intactId="EBI-907774">
        <id>P62168</id>
    </interactant>
    <interactant intactId="EBI-907809">
        <id>P14100</id>
        <label>PDE1A</label>
    </interactant>
    <organismsDiffer>true</organismsDiffer>
    <experiments>2</experiments>
</comment>
<comment type="subcellular location">
    <subcellularLocation>
        <location evidence="4">Golgi apparatus</location>
    </subcellularLocation>
    <subcellularLocation>
        <location evidence="9">Postsynaptic density</location>
    </subcellularLocation>
    <subcellularLocation>
        <location evidence="1">Cytoplasm</location>
        <location evidence="1">Perinuclear region</location>
    </subcellularLocation>
    <subcellularLocation>
        <location evidence="4">Cytoplasm</location>
    </subcellularLocation>
    <subcellularLocation>
        <location evidence="4">Cell membrane</location>
    </subcellularLocation>
    <subcellularLocation>
        <location evidence="1 3">Membrane</location>
        <topology evidence="1">Lipid-anchor</topology>
    </subcellularLocation>
    <text evidence="1 4 9">Associated with Golgi stacks. Post-synaptic densities of dendrites, and in the pre-synaptic nerve terminal at neuromuscular junctions.</text>
</comment>
<comment type="domain">
    <text>Binds 3 calcium ions via the second, third and fourth EF-hand. EF-2 and EF-3 bind both magnesium and calcium, while EF-4 binds only calcium. At the resting state, magnesium is bound to EF-2 and EF-3 and upon activation, both sites bind calcium simultaneously while EF-4 is the last one to be occupied.</text>
</comment>
<comment type="miscellaneous">
    <text>Fourfold reduction in calcium affinity for NCS1/FREQ in the presence of magnesium.</text>
</comment>
<comment type="similarity">
    <text evidence="9">Belongs to the recoverin family.</text>
</comment>
<proteinExistence type="evidence at protein level"/>